<evidence type="ECO:0000255" key="1">
    <source>
        <dbReference type="HAMAP-Rule" id="MF_00402"/>
    </source>
</evidence>
<evidence type="ECO:0000305" key="2"/>
<gene>
    <name evidence="1" type="primary">rplS</name>
    <name type="ordered locus">HD_1946</name>
</gene>
<feature type="chain" id="PRO_0000163462" description="Large ribosomal subunit protein bL19">
    <location>
        <begin position="1"/>
        <end position="116"/>
    </location>
</feature>
<organism>
    <name type="scientific">Haemophilus ducreyi (strain 35000HP / ATCC 700724)</name>
    <dbReference type="NCBI Taxonomy" id="233412"/>
    <lineage>
        <taxon>Bacteria</taxon>
        <taxon>Pseudomonadati</taxon>
        <taxon>Pseudomonadota</taxon>
        <taxon>Gammaproteobacteria</taxon>
        <taxon>Pasteurellales</taxon>
        <taxon>Pasteurellaceae</taxon>
        <taxon>Haemophilus</taxon>
    </lineage>
</organism>
<proteinExistence type="inferred from homology"/>
<accession>Q7VKG2</accession>
<comment type="function">
    <text evidence="1">This protein is located at the 30S-50S ribosomal subunit interface and may play a role in the structure and function of the aminoacyl-tRNA binding site.</text>
</comment>
<comment type="similarity">
    <text evidence="1">Belongs to the bacterial ribosomal protein bL19 family.</text>
</comment>
<sequence>MSNIIKQIEQEQLKQNVPSFRPGDTLEVKVWVVEGSKRRLQAFEGVVIAIRNRGLHSAFTLRKVSNGVGVERVLQTHSPIIDSIFVKRKGAVRKAKLYYLRERSGKSARIKERLGN</sequence>
<name>RL19_HAEDU</name>
<reference key="1">
    <citation type="submission" date="2003-06" db="EMBL/GenBank/DDBJ databases">
        <title>The complete genome sequence of Haemophilus ducreyi.</title>
        <authorList>
            <person name="Munson R.S. Jr."/>
            <person name="Ray W.C."/>
            <person name="Mahairas G."/>
            <person name="Sabo P."/>
            <person name="Mungur R."/>
            <person name="Johnson L."/>
            <person name="Nguyen D."/>
            <person name="Wang J."/>
            <person name="Forst C."/>
            <person name="Hood L."/>
        </authorList>
    </citation>
    <scope>NUCLEOTIDE SEQUENCE [LARGE SCALE GENOMIC DNA]</scope>
    <source>
        <strain>35000HP / ATCC 700724</strain>
    </source>
</reference>
<keyword id="KW-1185">Reference proteome</keyword>
<keyword id="KW-0687">Ribonucleoprotein</keyword>
<keyword id="KW-0689">Ribosomal protein</keyword>
<protein>
    <recommendedName>
        <fullName evidence="1">Large ribosomal subunit protein bL19</fullName>
    </recommendedName>
    <alternativeName>
        <fullName evidence="2">50S ribosomal protein L19</fullName>
    </alternativeName>
</protein>
<dbReference type="EMBL" id="AE017143">
    <property type="protein sequence ID" value="AAP96666.1"/>
    <property type="molecule type" value="Genomic_DNA"/>
</dbReference>
<dbReference type="RefSeq" id="WP_010945693.1">
    <property type="nucleotide sequence ID" value="NC_002940.2"/>
</dbReference>
<dbReference type="SMR" id="Q7VKG2"/>
<dbReference type="STRING" id="233412.HD_1946"/>
<dbReference type="KEGG" id="hdu:HD_1946"/>
<dbReference type="eggNOG" id="COG0335">
    <property type="taxonomic scope" value="Bacteria"/>
</dbReference>
<dbReference type="HOGENOM" id="CLU_103507_2_1_6"/>
<dbReference type="OrthoDB" id="9803541at2"/>
<dbReference type="Proteomes" id="UP000001022">
    <property type="component" value="Chromosome"/>
</dbReference>
<dbReference type="GO" id="GO:0022625">
    <property type="term" value="C:cytosolic large ribosomal subunit"/>
    <property type="evidence" value="ECO:0007669"/>
    <property type="project" value="TreeGrafter"/>
</dbReference>
<dbReference type="GO" id="GO:0003735">
    <property type="term" value="F:structural constituent of ribosome"/>
    <property type="evidence" value="ECO:0007669"/>
    <property type="project" value="InterPro"/>
</dbReference>
<dbReference type="GO" id="GO:0006412">
    <property type="term" value="P:translation"/>
    <property type="evidence" value="ECO:0007669"/>
    <property type="project" value="UniProtKB-UniRule"/>
</dbReference>
<dbReference type="FunFam" id="2.30.30.790:FF:000001">
    <property type="entry name" value="50S ribosomal protein L19"/>
    <property type="match status" value="1"/>
</dbReference>
<dbReference type="Gene3D" id="2.30.30.790">
    <property type="match status" value="1"/>
</dbReference>
<dbReference type="HAMAP" id="MF_00402">
    <property type="entry name" value="Ribosomal_bL19"/>
    <property type="match status" value="1"/>
</dbReference>
<dbReference type="InterPro" id="IPR001857">
    <property type="entry name" value="Ribosomal_bL19"/>
</dbReference>
<dbReference type="InterPro" id="IPR018257">
    <property type="entry name" value="Ribosomal_bL19_CS"/>
</dbReference>
<dbReference type="InterPro" id="IPR038657">
    <property type="entry name" value="Ribosomal_bL19_sf"/>
</dbReference>
<dbReference type="InterPro" id="IPR008991">
    <property type="entry name" value="Translation_prot_SH3-like_sf"/>
</dbReference>
<dbReference type="NCBIfam" id="TIGR01024">
    <property type="entry name" value="rplS_bact"/>
    <property type="match status" value="1"/>
</dbReference>
<dbReference type="PANTHER" id="PTHR15680:SF9">
    <property type="entry name" value="LARGE RIBOSOMAL SUBUNIT PROTEIN BL19M"/>
    <property type="match status" value="1"/>
</dbReference>
<dbReference type="PANTHER" id="PTHR15680">
    <property type="entry name" value="RIBOSOMAL PROTEIN L19"/>
    <property type="match status" value="1"/>
</dbReference>
<dbReference type="Pfam" id="PF01245">
    <property type="entry name" value="Ribosomal_L19"/>
    <property type="match status" value="1"/>
</dbReference>
<dbReference type="PIRSF" id="PIRSF002191">
    <property type="entry name" value="Ribosomal_L19"/>
    <property type="match status" value="1"/>
</dbReference>
<dbReference type="PRINTS" id="PR00061">
    <property type="entry name" value="RIBOSOMALL19"/>
</dbReference>
<dbReference type="SUPFAM" id="SSF50104">
    <property type="entry name" value="Translation proteins SH3-like domain"/>
    <property type="match status" value="1"/>
</dbReference>
<dbReference type="PROSITE" id="PS01015">
    <property type="entry name" value="RIBOSOMAL_L19"/>
    <property type="match status" value="1"/>
</dbReference>